<sequence length="121" mass="13284">MANLQSKSSSAKRKRRHFRVRAKINGTTSVPRLNVFKSNGHFYAQLIDDVKQKTIVAASTLKMTGLKSTSNIAAAEKVGDEIAKKALDKKVTTVVFDRGGYLYHGKVKAFAEAARKAGLKF</sequence>
<evidence type="ECO:0000255" key="1">
    <source>
        <dbReference type="HAMAP-Rule" id="MF_01337"/>
    </source>
</evidence>
<evidence type="ECO:0000305" key="2"/>
<protein>
    <recommendedName>
        <fullName evidence="1">Large ribosomal subunit protein uL18</fullName>
    </recommendedName>
    <alternativeName>
        <fullName evidence="2">50S ribosomal protein L18</fullName>
    </alternativeName>
</protein>
<dbReference type="EMBL" id="AY198133">
    <property type="protein sequence ID" value="AAP58907.1"/>
    <property type="molecule type" value="Genomic_DNA"/>
</dbReference>
<dbReference type="SMR" id="Q6XYX2"/>
<dbReference type="GO" id="GO:0022625">
    <property type="term" value="C:cytosolic large ribosomal subunit"/>
    <property type="evidence" value="ECO:0007669"/>
    <property type="project" value="TreeGrafter"/>
</dbReference>
<dbReference type="GO" id="GO:0008097">
    <property type="term" value="F:5S rRNA binding"/>
    <property type="evidence" value="ECO:0007669"/>
    <property type="project" value="TreeGrafter"/>
</dbReference>
<dbReference type="GO" id="GO:0003735">
    <property type="term" value="F:structural constituent of ribosome"/>
    <property type="evidence" value="ECO:0007669"/>
    <property type="project" value="InterPro"/>
</dbReference>
<dbReference type="GO" id="GO:0006412">
    <property type="term" value="P:translation"/>
    <property type="evidence" value="ECO:0007669"/>
    <property type="project" value="UniProtKB-UniRule"/>
</dbReference>
<dbReference type="CDD" id="cd00432">
    <property type="entry name" value="Ribosomal_L18_L5e"/>
    <property type="match status" value="1"/>
</dbReference>
<dbReference type="FunFam" id="3.30.420.100:FF:000001">
    <property type="entry name" value="50S ribosomal protein L18"/>
    <property type="match status" value="1"/>
</dbReference>
<dbReference type="Gene3D" id="3.30.420.100">
    <property type="match status" value="1"/>
</dbReference>
<dbReference type="HAMAP" id="MF_01337_B">
    <property type="entry name" value="Ribosomal_uL18_B"/>
    <property type="match status" value="1"/>
</dbReference>
<dbReference type="InterPro" id="IPR004389">
    <property type="entry name" value="Ribosomal_uL18_bac-type"/>
</dbReference>
<dbReference type="InterPro" id="IPR005484">
    <property type="entry name" value="Ribosomal_uL18_bac/euk"/>
</dbReference>
<dbReference type="NCBIfam" id="TIGR00060">
    <property type="entry name" value="L18_bact"/>
    <property type="match status" value="1"/>
</dbReference>
<dbReference type="PANTHER" id="PTHR12899">
    <property type="entry name" value="39S RIBOSOMAL PROTEIN L18, MITOCHONDRIAL"/>
    <property type="match status" value="1"/>
</dbReference>
<dbReference type="PANTHER" id="PTHR12899:SF3">
    <property type="entry name" value="LARGE RIBOSOMAL SUBUNIT PROTEIN UL18M"/>
    <property type="match status" value="1"/>
</dbReference>
<dbReference type="Pfam" id="PF00861">
    <property type="entry name" value="Ribosomal_L18p"/>
    <property type="match status" value="1"/>
</dbReference>
<dbReference type="SUPFAM" id="SSF53137">
    <property type="entry name" value="Translational machinery components"/>
    <property type="match status" value="1"/>
</dbReference>
<comment type="function">
    <text evidence="1">This is one of the proteins that bind and probably mediate the attachment of the 5S RNA into the large ribosomal subunit, where it forms part of the central protuberance.</text>
</comment>
<comment type="subunit">
    <text evidence="1">Part of the 50S ribosomal subunit; part of the 5S rRNA/L5/L18/L25 subcomplex. Contacts the 5S and 23S rRNAs.</text>
</comment>
<comment type="similarity">
    <text evidence="1">Belongs to the universal ribosomal protein uL18 family.</text>
</comment>
<accession>Q6XYX2</accession>
<keyword id="KW-0687">Ribonucleoprotein</keyword>
<keyword id="KW-0689">Ribosomal protein</keyword>
<keyword id="KW-0694">RNA-binding</keyword>
<keyword id="KW-0699">rRNA-binding</keyword>
<reference key="1">
    <citation type="journal article" date="2003" name="Mol. Genet. Genomics">
        <title>Gene content and organization of an 85-kb DNA segment from the genome of the phytopathogenic mollicute Spiroplasma kunkelii.</title>
        <authorList>
            <person name="Zhao Y."/>
            <person name="Hammond R.W."/>
            <person name="Jomantiene R."/>
            <person name="Dally E.L."/>
            <person name="Lee I.-M."/>
            <person name="Jia H."/>
            <person name="Wu H."/>
            <person name="Lin S."/>
            <person name="Zhang P."/>
            <person name="Kenton S."/>
            <person name="Najar F.Z."/>
            <person name="Hua A."/>
            <person name="Roe B.A."/>
            <person name="Fletcher J."/>
            <person name="Davis R.E."/>
        </authorList>
    </citation>
    <scope>NUCLEOTIDE SEQUENCE [GENOMIC DNA]</scope>
    <source>
        <strain>CR2-3x</strain>
    </source>
</reference>
<proteinExistence type="inferred from homology"/>
<feature type="chain" id="PRO_0000131341" description="Large ribosomal subunit protein uL18">
    <location>
        <begin position="1"/>
        <end position="121"/>
    </location>
</feature>
<organism>
    <name type="scientific">Spiroplasma kunkelii</name>
    <dbReference type="NCBI Taxonomy" id="47834"/>
    <lineage>
        <taxon>Bacteria</taxon>
        <taxon>Bacillati</taxon>
        <taxon>Mycoplasmatota</taxon>
        <taxon>Mollicutes</taxon>
        <taxon>Entomoplasmatales</taxon>
        <taxon>Spiroplasmataceae</taxon>
        <taxon>Spiroplasma</taxon>
    </lineage>
</organism>
<gene>
    <name evidence="1" type="primary">rplR</name>
</gene>
<name>RL18_SPIKU</name>